<reference key="1">
    <citation type="journal article" date="2005" name="J. Bacteriol.">
        <title>Completion of the genome sequence of Brucella abortus and comparison to the highly similar genomes of Brucella melitensis and Brucella suis.</title>
        <authorList>
            <person name="Halling S.M."/>
            <person name="Peterson-Burch B.D."/>
            <person name="Bricker B.J."/>
            <person name="Zuerner R.L."/>
            <person name="Qing Z."/>
            <person name="Li L.-L."/>
            <person name="Kapur V."/>
            <person name="Alt D.P."/>
            <person name="Olsen S.C."/>
        </authorList>
    </citation>
    <scope>NUCLEOTIDE SEQUENCE [LARGE SCALE GENOMIC DNA]</scope>
    <source>
        <strain>9-941</strain>
    </source>
</reference>
<organism>
    <name type="scientific">Brucella abortus biovar 1 (strain 9-941)</name>
    <dbReference type="NCBI Taxonomy" id="262698"/>
    <lineage>
        <taxon>Bacteria</taxon>
        <taxon>Pseudomonadati</taxon>
        <taxon>Pseudomonadota</taxon>
        <taxon>Alphaproteobacteria</taxon>
        <taxon>Hyphomicrobiales</taxon>
        <taxon>Brucellaceae</taxon>
        <taxon>Brucella/Ochrobactrum group</taxon>
        <taxon>Brucella</taxon>
    </lineage>
</organism>
<protein>
    <recommendedName>
        <fullName evidence="1">Succinyl-diaminopimelate desuccinylase</fullName>
        <shortName evidence="1">SDAP desuccinylase</shortName>
        <ecNumber evidence="1">3.5.1.18</ecNumber>
    </recommendedName>
    <alternativeName>
        <fullName evidence="1">N-succinyl-LL-2,6-diaminoheptanedioate amidohydrolase</fullName>
    </alternativeName>
</protein>
<proteinExistence type="inferred from homology"/>
<evidence type="ECO:0000255" key="1">
    <source>
        <dbReference type="HAMAP-Rule" id="MF_01690"/>
    </source>
</evidence>
<keyword id="KW-0028">Amino-acid biosynthesis</keyword>
<keyword id="KW-0170">Cobalt</keyword>
<keyword id="KW-0220">Diaminopimelate biosynthesis</keyword>
<keyword id="KW-0378">Hydrolase</keyword>
<keyword id="KW-0457">Lysine biosynthesis</keyword>
<keyword id="KW-0479">Metal-binding</keyword>
<keyword id="KW-0862">Zinc</keyword>
<comment type="function">
    <text evidence="1">Catalyzes the hydrolysis of N-succinyl-L,L-diaminopimelic acid (SDAP), forming succinate and LL-2,6-diaminopimelate (DAP), an intermediate involved in the bacterial biosynthesis of lysine and meso-diaminopimelic acid, an essential component of bacterial cell walls.</text>
</comment>
<comment type="catalytic activity">
    <reaction evidence="1">
        <text>N-succinyl-(2S,6S)-2,6-diaminopimelate + H2O = (2S,6S)-2,6-diaminopimelate + succinate</text>
        <dbReference type="Rhea" id="RHEA:22608"/>
        <dbReference type="ChEBI" id="CHEBI:15377"/>
        <dbReference type="ChEBI" id="CHEBI:30031"/>
        <dbReference type="ChEBI" id="CHEBI:57609"/>
        <dbReference type="ChEBI" id="CHEBI:58087"/>
        <dbReference type="EC" id="3.5.1.18"/>
    </reaction>
</comment>
<comment type="cofactor">
    <cofactor evidence="1">
        <name>Zn(2+)</name>
        <dbReference type="ChEBI" id="CHEBI:29105"/>
    </cofactor>
    <cofactor evidence="1">
        <name>Co(2+)</name>
        <dbReference type="ChEBI" id="CHEBI:48828"/>
    </cofactor>
    <text evidence="1">Binds 2 Zn(2+) or Co(2+) ions per subunit.</text>
</comment>
<comment type="pathway">
    <text evidence="1">Amino-acid biosynthesis; L-lysine biosynthesis via DAP pathway; LL-2,6-diaminopimelate from (S)-tetrahydrodipicolinate (succinylase route): step 3/3.</text>
</comment>
<comment type="subunit">
    <text evidence="1">Homodimer.</text>
</comment>
<comment type="similarity">
    <text evidence="1">Belongs to the peptidase M20A family. DapE subfamily.</text>
</comment>
<name>DAPE_BRUAB</name>
<accession>Q576T3</accession>
<dbReference type="EC" id="3.5.1.18" evidence="1"/>
<dbReference type="EMBL" id="AE017224">
    <property type="protein sequence ID" value="AAX76351.1"/>
    <property type="molecule type" value="Genomic_DNA"/>
</dbReference>
<dbReference type="RefSeq" id="WP_002967376.1">
    <property type="nucleotide sequence ID" value="NC_006933.1"/>
</dbReference>
<dbReference type="SMR" id="Q576T3"/>
<dbReference type="EnsemblBacteria" id="AAX76351">
    <property type="protein sequence ID" value="AAX76351"/>
    <property type="gene ID" value="BruAb2_0971"/>
</dbReference>
<dbReference type="GeneID" id="93015186"/>
<dbReference type="KEGG" id="bmb:BruAb2_0971"/>
<dbReference type="HOGENOM" id="CLU_021802_4_0_5"/>
<dbReference type="UniPathway" id="UPA00034">
    <property type="reaction ID" value="UER00021"/>
</dbReference>
<dbReference type="Proteomes" id="UP000000540">
    <property type="component" value="Chromosome II"/>
</dbReference>
<dbReference type="GO" id="GO:0008777">
    <property type="term" value="F:acetylornithine deacetylase activity"/>
    <property type="evidence" value="ECO:0007669"/>
    <property type="project" value="TreeGrafter"/>
</dbReference>
<dbReference type="GO" id="GO:0050897">
    <property type="term" value="F:cobalt ion binding"/>
    <property type="evidence" value="ECO:0007669"/>
    <property type="project" value="UniProtKB-UniRule"/>
</dbReference>
<dbReference type="GO" id="GO:0009014">
    <property type="term" value="F:succinyl-diaminopimelate desuccinylase activity"/>
    <property type="evidence" value="ECO:0007669"/>
    <property type="project" value="UniProtKB-UniRule"/>
</dbReference>
<dbReference type="GO" id="GO:0008270">
    <property type="term" value="F:zinc ion binding"/>
    <property type="evidence" value="ECO:0007669"/>
    <property type="project" value="UniProtKB-UniRule"/>
</dbReference>
<dbReference type="GO" id="GO:0019877">
    <property type="term" value="P:diaminopimelate biosynthetic process"/>
    <property type="evidence" value="ECO:0007669"/>
    <property type="project" value="UniProtKB-UniRule"/>
</dbReference>
<dbReference type="GO" id="GO:0006526">
    <property type="term" value="P:L-arginine biosynthetic process"/>
    <property type="evidence" value="ECO:0007669"/>
    <property type="project" value="TreeGrafter"/>
</dbReference>
<dbReference type="GO" id="GO:0009089">
    <property type="term" value="P:lysine biosynthetic process via diaminopimelate"/>
    <property type="evidence" value="ECO:0007669"/>
    <property type="project" value="UniProtKB-UniRule"/>
</dbReference>
<dbReference type="CDD" id="cd03891">
    <property type="entry name" value="M20_DapE_proteobac"/>
    <property type="match status" value="1"/>
</dbReference>
<dbReference type="Gene3D" id="3.30.70.360">
    <property type="match status" value="1"/>
</dbReference>
<dbReference type="Gene3D" id="3.40.630.10">
    <property type="entry name" value="Zn peptidases"/>
    <property type="match status" value="2"/>
</dbReference>
<dbReference type="HAMAP" id="MF_01690">
    <property type="entry name" value="DapE"/>
    <property type="match status" value="1"/>
</dbReference>
<dbReference type="InterPro" id="IPR001261">
    <property type="entry name" value="ArgE/DapE_CS"/>
</dbReference>
<dbReference type="InterPro" id="IPR036264">
    <property type="entry name" value="Bact_exopeptidase_dim_dom"/>
</dbReference>
<dbReference type="InterPro" id="IPR005941">
    <property type="entry name" value="DapE_proteobac"/>
</dbReference>
<dbReference type="InterPro" id="IPR002933">
    <property type="entry name" value="Peptidase_M20"/>
</dbReference>
<dbReference type="InterPro" id="IPR011650">
    <property type="entry name" value="Peptidase_M20_dimer"/>
</dbReference>
<dbReference type="InterPro" id="IPR050072">
    <property type="entry name" value="Peptidase_M20A"/>
</dbReference>
<dbReference type="NCBIfam" id="TIGR01246">
    <property type="entry name" value="dapE_proteo"/>
    <property type="match status" value="1"/>
</dbReference>
<dbReference type="NCBIfam" id="NF009557">
    <property type="entry name" value="PRK13009.1"/>
    <property type="match status" value="1"/>
</dbReference>
<dbReference type="PANTHER" id="PTHR43808">
    <property type="entry name" value="ACETYLORNITHINE DEACETYLASE"/>
    <property type="match status" value="1"/>
</dbReference>
<dbReference type="PANTHER" id="PTHR43808:SF31">
    <property type="entry name" value="N-ACETYL-L-CITRULLINE DEACETYLASE"/>
    <property type="match status" value="1"/>
</dbReference>
<dbReference type="Pfam" id="PF07687">
    <property type="entry name" value="M20_dimer"/>
    <property type="match status" value="1"/>
</dbReference>
<dbReference type="Pfam" id="PF01546">
    <property type="entry name" value="Peptidase_M20"/>
    <property type="match status" value="1"/>
</dbReference>
<dbReference type="SUPFAM" id="SSF55031">
    <property type="entry name" value="Bacterial exopeptidase dimerisation domain"/>
    <property type="match status" value="1"/>
</dbReference>
<dbReference type="SUPFAM" id="SSF53187">
    <property type="entry name" value="Zn-dependent exopeptidases"/>
    <property type="match status" value="1"/>
</dbReference>
<dbReference type="PROSITE" id="PS00758">
    <property type="entry name" value="ARGE_DAPE_CPG2_1"/>
    <property type="match status" value="1"/>
</dbReference>
<dbReference type="PROSITE" id="PS00759">
    <property type="entry name" value="ARGE_DAPE_CPG2_2"/>
    <property type="match status" value="1"/>
</dbReference>
<gene>
    <name evidence="1" type="primary">dapE</name>
    <name type="ordered locus">BruAb2_0971</name>
</gene>
<sequence>MTLPVNPVDNLAALIRCPSVTPAEGGALTALEKMLKLMGFSANRPVFSDDNTPDIENLYARKSGNGPHLMFAGHTDVVPPGDEKDWKHPPFAAEIEDGVMYGRGAVDMKGGIACFVAAVARHIEKHGNIKGSISFLITGDEEGPAVNGTVKLLEWAKQRGESWDASIVGEPTNPNALGDMIKIGRRGSLSGTITVHGVQGHAAYPHLAENPVRGIVTLVDSLLYPAFDEGTANFQASNLEVTTIDVGNKATNVIPNKATASFNIRFNDTWTAESLQAEIISRLERAARDNRLRQGRETPIKYELTWRERPSHVFLTHDEKLIGTLTASVEAVTGKRPELSTSGGTSDARFIKDYCPVVEFGLTGQTMHMVDERVALADLEGLTQIYERFIADFFG</sequence>
<feature type="chain" id="PRO_0000375484" description="Succinyl-diaminopimelate desuccinylase">
    <location>
        <begin position="1"/>
        <end position="395"/>
    </location>
</feature>
<feature type="active site" evidence="1">
    <location>
        <position position="76"/>
    </location>
</feature>
<feature type="active site" description="Proton acceptor" evidence="1">
    <location>
        <position position="141"/>
    </location>
</feature>
<feature type="binding site" evidence="1">
    <location>
        <position position="74"/>
    </location>
    <ligand>
        <name>Zn(2+)</name>
        <dbReference type="ChEBI" id="CHEBI:29105"/>
        <label>1</label>
    </ligand>
</feature>
<feature type="binding site" evidence="1">
    <location>
        <position position="107"/>
    </location>
    <ligand>
        <name>Zn(2+)</name>
        <dbReference type="ChEBI" id="CHEBI:29105"/>
        <label>1</label>
    </ligand>
</feature>
<feature type="binding site" evidence="1">
    <location>
        <position position="107"/>
    </location>
    <ligand>
        <name>Zn(2+)</name>
        <dbReference type="ChEBI" id="CHEBI:29105"/>
        <label>2</label>
    </ligand>
</feature>
<feature type="binding site" evidence="1">
    <location>
        <position position="142"/>
    </location>
    <ligand>
        <name>Zn(2+)</name>
        <dbReference type="ChEBI" id="CHEBI:29105"/>
        <label>2</label>
    </ligand>
</feature>
<feature type="binding site" evidence="1">
    <location>
        <position position="170"/>
    </location>
    <ligand>
        <name>Zn(2+)</name>
        <dbReference type="ChEBI" id="CHEBI:29105"/>
        <label>1</label>
    </ligand>
</feature>
<feature type="binding site" evidence="1">
    <location>
        <position position="368"/>
    </location>
    <ligand>
        <name>Zn(2+)</name>
        <dbReference type="ChEBI" id="CHEBI:29105"/>
        <label>2</label>
    </ligand>
</feature>